<reference key="1">
    <citation type="journal article" date="2007" name="J. Bacteriol.">
        <title>The complete genome sequence of Campylobacter jejuni strain 81116 (NCTC11828).</title>
        <authorList>
            <person name="Pearson B.M."/>
            <person name="Gaskin D.J.H."/>
            <person name="Segers R.P.A.M."/>
            <person name="Wells J.M."/>
            <person name="Nuijten P.J.M."/>
            <person name="van Vliet A.H.M."/>
        </authorList>
    </citation>
    <scope>NUCLEOTIDE SEQUENCE [LARGE SCALE GENOMIC DNA]</scope>
    <source>
        <strain>81116 / NCTC 11828</strain>
    </source>
</reference>
<protein>
    <recommendedName>
        <fullName evidence="1">ATP synthase epsilon chain</fullName>
    </recommendedName>
    <alternativeName>
        <fullName evidence="1">ATP synthase F1 sector epsilon subunit</fullName>
    </alternativeName>
    <alternativeName>
        <fullName evidence="1">F-ATPase epsilon subunit</fullName>
    </alternativeName>
</protein>
<accession>A8FJR3</accession>
<feature type="chain" id="PRO_1000072499" description="ATP synthase epsilon chain">
    <location>
        <begin position="1"/>
        <end position="129"/>
    </location>
</feature>
<keyword id="KW-0066">ATP synthesis</keyword>
<keyword id="KW-0997">Cell inner membrane</keyword>
<keyword id="KW-1003">Cell membrane</keyword>
<keyword id="KW-0139">CF(1)</keyword>
<keyword id="KW-0375">Hydrogen ion transport</keyword>
<keyword id="KW-0406">Ion transport</keyword>
<keyword id="KW-0472">Membrane</keyword>
<keyword id="KW-0813">Transport</keyword>
<sequence length="129" mass="13722">MNDLINFEIVTPLGVIYQGEVKSVTLPGSEGEFGVLKGHATLVSSLKSGVIDIEKADLNHELIAIDAGHAKVDEDKICVLAKGAVWVCGSDESEIEKNLAQAKDLIKSMSSDNAALAATFSKLDNARMH</sequence>
<organism>
    <name type="scientific">Campylobacter jejuni subsp. jejuni serotype O:6 (strain 81116 / NCTC 11828)</name>
    <dbReference type="NCBI Taxonomy" id="407148"/>
    <lineage>
        <taxon>Bacteria</taxon>
        <taxon>Pseudomonadati</taxon>
        <taxon>Campylobacterota</taxon>
        <taxon>Epsilonproteobacteria</taxon>
        <taxon>Campylobacterales</taxon>
        <taxon>Campylobacteraceae</taxon>
        <taxon>Campylobacter</taxon>
    </lineage>
</organism>
<evidence type="ECO:0000255" key="1">
    <source>
        <dbReference type="HAMAP-Rule" id="MF_00530"/>
    </source>
</evidence>
<proteinExistence type="inferred from homology"/>
<name>ATPE_CAMJ8</name>
<dbReference type="EMBL" id="CP000814">
    <property type="protein sequence ID" value="ABV51700.1"/>
    <property type="molecule type" value="Genomic_DNA"/>
</dbReference>
<dbReference type="RefSeq" id="WP_002866728.1">
    <property type="nucleotide sequence ID" value="NC_009839.1"/>
</dbReference>
<dbReference type="SMR" id="A8FJR3"/>
<dbReference type="KEGG" id="cju:C8J_0101"/>
<dbReference type="HOGENOM" id="CLU_084338_2_1_7"/>
<dbReference type="GO" id="GO:0005886">
    <property type="term" value="C:plasma membrane"/>
    <property type="evidence" value="ECO:0007669"/>
    <property type="project" value="UniProtKB-SubCell"/>
</dbReference>
<dbReference type="GO" id="GO:0045259">
    <property type="term" value="C:proton-transporting ATP synthase complex"/>
    <property type="evidence" value="ECO:0007669"/>
    <property type="project" value="UniProtKB-KW"/>
</dbReference>
<dbReference type="GO" id="GO:0005524">
    <property type="term" value="F:ATP binding"/>
    <property type="evidence" value="ECO:0007669"/>
    <property type="project" value="UniProtKB-UniRule"/>
</dbReference>
<dbReference type="GO" id="GO:0046933">
    <property type="term" value="F:proton-transporting ATP synthase activity, rotational mechanism"/>
    <property type="evidence" value="ECO:0007669"/>
    <property type="project" value="UniProtKB-UniRule"/>
</dbReference>
<dbReference type="CDD" id="cd12152">
    <property type="entry name" value="F1-ATPase_delta"/>
    <property type="match status" value="1"/>
</dbReference>
<dbReference type="Gene3D" id="2.60.15.10">
    <property type="entry name" value="F0F1 ATP synthase delta/epsilon subunit, N-terminal"/>
    <property type="match status" value="1"/>
</dbReference>
<dbReference type="HAMAP" id="MF_00530">
    <property type="entry name" value="ATP_synth_epsil_bac"/>
    <property type="match status" value="1"/>
</dbReference>
<dbReference type="InterPro" id="IPR001469">
    <property type="entry name" value="ATP_synth_F1_dsu/esu"/>
</dbReference>
<dbReference type="InterPro" id="IPR020546">
    <property type="entry name" value="ATP_synth_F1_dsu/esu_N"/>
</dbReference>
<dbReference type="InterPro" id="IPR036771">
    <property type="entry name" value="ATPsynth_dsu/esu_N"/>
</dbReference>
<dbReference type="NCBIfam" id="TIGR01216">
    <property type="entry name" value="ATP_synt_epsi"/>
    <property type="match status" value="1"/>
</dbReference>
<dbReference type="PANTHER" id="PTHR13822">
    <property type="entry name" value="ATP SYNTHASE DELTA/EPSILON CHAIN"/>
    <property type="match status" value="1"/>
</dbReference>
<dbReference type="PANTHER" id="PTHR13822:SF10">
    <property type="entry name" value="ATP SYNTHASE EPSILON CHAIN, CHLOROPLASTIC"/>
    <property type="match status" value="1"/>
</dbReference>
<dbReference type="Pfam" id="PF02823">
    <property type="entry name" value="ATP-synt_DE_N"/>
    <property type="match status" value="1"/>
</dbReference>
<dbReference type="SUPFAM" id="SSF51344">
    <property type="entry name" value="Epsilon subunit of F1F0-ATP synthase N-terminal domain"/>
    <property type="match status" value="1"/>
</dbReference>
<gene>
    <name evidence="1" type="primary">atpC</name>
    <name type="ordered locus">C8J_0101</name>
</gene>
<comment type="function">
    <text evidence="1">Produces ATP from ADP in the presence of a proton gradient across the membrane.</text>
</comment>
<comment type="subunit">
    <text evidence="1">F-type ATPases have 2 components, CF(1) - the catalytic core - and CF(0) - the membrane proton channel. CF(1) has five subunits: alpha(3), beta(3), gamma(1), delta(1), epsilon(1). CF(0) has three main subunits: a, b and c.</text>
</comment>
<comment type="subcellular location">
    <subcellularLocation>
        <location evidence="1">Cell inner membrane</location>
        <topology evidence="1">Peripheral membrane protein</topology>
    </subcellularLocation>
</comment>
<comment type="similarity">
    <text evidence="1">Belongs to the ATPase epsilon chain family.</text>
</comment>